<gene>
    <name evidence="1" type="primary">rimP</name>
    <name type="ordered locus">RALTA_A1852</name>
</gene>
<comment type="function">
    <text evidence="1">Required for maturation of 30S ribosomal subunits.</text>
</comment>
<comment type="subcellular location">
    <subcellularLocation>
        <location evidence="1">Cytoplasm</location>
    </subcellularLocation>
</comment>
<comment type="similarity">
    <text evidence="1">Belongs to the RimP family.</text>
</comment>
<sequence length="162" mass="17865">MHLADLIETTLSGMGYELVELERAPAGLLRVYIDQPETGIAIEDCEKVSRQLTHVFTVENVDYERLEVSSPGLDRPLKKLADFVRFAGAEARVTLRLPVNGQKNFTGILREPTGAAGEEKIGLEFEGKDGPALLEFAVSDVDKARLVPVIDFKGNQRKGNKQ</sequence>
<reference key="1">
    <citation type="journal article" date="2008" name="Genome Res.">
        <title>Genome sequence of the beta-rhizobium Cupriavidus taiwanensis and comparative genomics of rhizobia.</title>
        <authorList>
            <person name="Amadou C."/>
            <person name="Pascal G."/>
            <person name="Mangenot S."/>
            <person name="Glew M."/>
            <person name="Bontemps C."/>
            <person name="Capela D."/>
            <person name="Carrere S."/>
            <person name="Cruveiller S."/>
            <person name="Dossat C."/>
            <person name="Lajus A."/>
            <person name="Marchetti M."/>
            <person name="Poinsot V."/>
            <person name="Rouy Z."/>
            <person name="Servin B."/>
            <person name="Saad M."/>
            <person name="Schenowitz C."/>
            <person name="Barbe V."/>
            <person name="Batut J."/>
            <person name="Medigue C."/>
            <person name="Masson-Boivin C."/>
        </authorList>
    </citation>
    <scope>NUCLEOTIDE SEQUENCE [LARGE SCALE GENOMIC DNA]</scope>
    <source>
        <strain>DSM 17343 / BCRC 17206 / CCUG 44338 / CIP 107171 / LMG 19424 / R1</strain>
    </source>
</reference>
<evidence type="ECO:0000255" key="1">
    <source>
        <dbReference type="HAMAP-Rule" id="MF_01077"/>
    </source>
</evidence>
<protein>
    <recommendedName>
        <fullName evidence="1">Ribosome maturation factor RimP</fullName>
    </recommendedName>
</protein>
<proteinExistence type="inferred from homology"/>
<organism>
    <name type="scientific">Cupriavidus taiwanensis (strain DSM 17343 / BCRC 17206 / CCUG 44338 / CIP 107171 / LMG 19424 / R1)</name>
    <name type="common">Ralstonia taiwanensis (strain LMG 19424)</name>
    <dbReference type="NCBI Taxonomy" id="977880"/>
    <lineage>
        <taxon>Bacteria</taxon>
        <taxon>Pseudomonadati</taxon>
        <taxon>Pseudomonadota</taxon>
        <taxon>Betaproteobacteria</taxon>
        <taxon>Burkholderiales</taxon>
        <taxon>Burkholderiaceae</taxon>
        <taxon>Cupriavidus</taxon>
    </lineage>
</organism>
<feature type="chain" id="PRO_1000136754" description="Ribosome maturation factor RimP">
    <location>
        <begin position="1"/>
        <end position="162"/>
    </location>
</feature>
<keyword id="KW-0963">Cytoplasm</keyword>
<keyword id="KW-0690">Ribosome biogenesis</keyword>
<dbReference type="EMBL" id="CU633749">
    <property type="protein sequence ID" value="CAQ69793.1"/>
    <property type="molecule type" value="Genomic_DNA"/>
</dbReference>
<dbReference type="RefSeq" id="WP_012353110.1">
    <property type="nucleotide sequence ID" value="NC_010528.1"/>
</dbReference>
<dbReference type="SMR" id="B3R1E6"/>
<dbReference type="GeneID" id="29760919"/>
<dbReference type="KEGG" id="cti:RALTA_A1852"/>
<dbReference type="eggNOG" id="COG0779">
    <property type="taxonomic scope" value="Bacteria"/>
</dbReference>
<dbReference type="HOGENOM" id="CLU_070525_1_0_4"/>
<dbReference type="BioCyc" id="CTAI977880:RALTA_RS08925-MONOMER"/>
<dbReference type="Proteomes" id="UP000001692">
    <property type="component" value="Chromosome 1"/>
</dbReference>
<dbReference type="GO" id="GO:0005829">
    <property type="term" value="C:cytosol"/>
    <property type="evidence" value="ECO:0007669"/>
    <property type="project" value="TreeGrafter"/>
</dbReference>
<dbReference type="GO" id="GO:0000028">
    <property type="term" value="P:ribosomal small subunit assembly"/>
    <property type="evidence" value="ECO:0007669"/>
    <property type="project" value="TreeGrafter"/>
</dbReference>
<dbReference type="GO" id="GO:0006412">
    <property type="term" value="P:translation"/>
    <property type="evidence" value="ECO:0007669"/>
    <property type="project" value="TreeGrafter"/>
</dbReference>
<dbReference type="CDD" id="cd01734">
    <property type="entry name" value="YlxS_C"/>
    <property type="match status" value="1"/>
</dbReference>
<dbReference type="Gene3D" id="2.30.30.180">
    <property type="entry name" value="Ribosome maturation factor RimP, C-terminal domain"/>
    <property type="match status" value="1"/>
</dbReference>
<dbReference type="Gene3D" id="3.30.300.70">
    <property type="entry name" value="RimP-like superfamily, N-terminal"/>
    <property type="match status" value="1"/>
</dbReference>
<dbReference type="HAMAP" id="MF_01077">
    <property type="entry name" value="RimP"/>
    <property type="match status" value="1"/>
</dbReference>
<dbReference type="InterPro" id="IPR003728">
    <property type="entry name" value="Ribosome_maturation_RimP"/>
</dbReference>
<dbReference type="InterPro" id="IPR028998">
    <property type="entry name" value="RimP_C"/>
</dbReference>
<dbReference type="InterPro" id="IPR036847">
    <property type="entry name" value="RimP_C_sf"/>
</dbReference>
<dbReference type="InterPro" id="IPR028989">
    <property type="entry name" value="RimP_N"/>
</dbReference>
<dbReference type="InterPro" id="IPR035956">
    <property type="entry name" value="RimP_N_sf"/>
</dbReference>
<dbReference type="NCBIfam" id="NF000929">
    <property type="entry name" value="PRK00092.2-1"/>
    <property type="match status" value="1"/>
</dbReference>
<dbReference type="PANTHER" id="PTHR33867">
    <property type="entry name" value="RIBOSOME MATURATION FACTOR RIMP"/>
    <property type="match status" value="1"/>
</dbReference>
<dbReference type="PANTHER" id="PTHR33867:SF1">
    <property type="entry name" value="RIBOSOME MATURATION FACTOR RIMP"/>
    <property type="match status" value="1"/>
</dbReference>
<dbReference type="Pfam" id="PF17384">
    <property type="entry name" value="DUF150_C"/>
    <property type="match status" value="1"/>
</dbReference>
<dbReference type="Pfam" id="PF02576">
    <property type="entry name" value="RimP_N"/>
    <property type="match status" value="1"/>
</dbReference>
<dbReference type="SUPFAM" id="SSF74942">
    <property type="entry name" value="YhbC-like, C-terminal domain"/>
    <property type="match status" value="1"/>
</dbReference>
<dbReference type="SUPFAM" id="SSF75420">
    <property type="entry name" value="YhbC-like, N-terminal domain"/>
    <property type="match status" value="1"/>
</dbReference>
<name>RIMP_CUPTR</name>
<accession>B3R1E6</accession>